<comment type="function">
    <text evidence="3 9 13 14 15 16 18 19">Sigma factors are initiation factors that promote the attachment of RNA polymerase (RNAP) to specific initiation sites and are then released (PubMed:2691330, PubMed:7889935, PubMed:9159522, PubMed:9159523). Extracytoplasmic function (ECF) sigma-E controls the envelope stress response, responding to periplasmic protein stress, increased levels of periplasmic lipopolysaccharide (LPS) as well as heat shock (PubMed:7889935) and oxidative stress; it controls protein processing in the extracytoplasmic compartment. The 90 member regulon consists of the genes necessary for the synthesis and maintenance of both proteins and LPS of the outer membrane (PubMed:11274153, PubMed:16336047, PubMed:7889934). Indirectly activates transcription of csrB and csrC, 2 sRNAs that antagonize translational regulator CsrA, linking envelope stress, the stringent response and the catabolite repression systems (PubMed:28924029).</text>
</comment>
<comment type="activity regulation">
    <text evidence="8 11 12 18">ECF sigma-E is held in an inactive form by its cognate anti-sigma factor (RseA) until released by regulated intramembrane proteolysis (RIP). RIP occurs when an extracytoplasmic signal (periplasmic stress and excess LPS) triggers a concerted proteolytic cascade to transmit information and elicit cellular responses. The anti-sigma factor RseA is an inner membrane protein, binding sigma-E in the cytoplasm and RseB in the periplasm. RseA is first cut extracytoplasmically (site-1 protease, S1P, by DegS), then within the membrane itself (site-2 protease, S2P, by RseP), while cytoplasmic proteases (predominantly ClpX-ClpP) finish degrading the regulatory protein, liberating sigma-E (PubMed:15371343). Degradation of RseA requires 2 signals to activate DegS; an outer membrane protein (OMP) signal activates DegS, while an LPS signal causes release of RseB from RseA, freeing RseA to be cleaved (PubMed:23687042). The rate-limiting step in this protease cascade is the first signal-sensing cleavage (half-life about 1 minute) (PubMed:17210793).</text>
</comment>
<comment type="subunit">
    <text evidence="4 5 6 8 10 13 18 19">Interacts transiently with the RNAP catalytic core formed by RpoA, RpoB, RpoC and RpoZ (2 alpha, 1 beta, 1 beta' and 1 omega subunit) to form the RNAP holoenzyme that can initiate transcription (PubMed:12016219, PubMed:12718891, PubMed:2691330, PubMed:7889935). Interacts 1:1 with anti-sigma-E factor RseA which prevents binding to RNAP catalytic core (PubMed:11777003, PubMed:12016219, PubMed:12718891, PubMed:15371343, PubMed:9159522, PubMed:9159523). An N-terminal (residues 1-108) RseA sigma-E complex also interacts with SspB (PubMed:15371343).</text>
</comment>
<comment type="interaction">
    <interactant intactId="EBI-1129580">
        <id>P0AGB6</id>
    </interactant>
    <interactant intactId="EBI-1120353">
        <id>Q46864</id>
        <label>mqsA</label>
    </interactant>
    <organismsDiffer>false</organismsDiffer>
    <experiments>2</experiments>
</comment>
<comment type="subcellular location">
    <subcellularLocation>
        <location evidence="4 18">Cytoplasm</location>
    </subcellularLocation>
    <text evidence="4">Associates with the inner membrane via RseA (PubMed:11777003, PubMed:9159522).</text>
</comment>
<comment type="induction">
    <text evidence="2 7 12 13 14 15 16 17 18 19 20">Induced after shifting to 50 degrees Celsius (at protein level) (PubMed:2691330). Induced when the level of outer membrane proteins (OMP) increases (at protein level) (PubMed:10500101, PubMed:8276244). Induced as periplasmic levels of LPS levels increase (PubMed:23687042). Induced by misfolded periplasmic proteins (PubMed:9351822). Transcription positively autoregulated (via promoter P2) (PubMed:7889935). Transcription slightly induced by elevated temperatures (PubMed:7889934). Transiently induced by cold shock in a PNPase-dependent fashion (PubMed:14527658). Translation repressed by CsrA which binds to 3 sites in the 5'-UTR which occludes the ribosome binding site (PubMed:28924029). Translation is coupled to upstream leader peptide RseD, whose stop codon overlaps with the start codon of rpoE; when coupling is eliminated translation is decreased by about 50% (PubMed:28924029). Part of the rseD-rpoE-rseA-rseB-rseC operon (PubMed:28924029, PubMed:9159522, PubMed:9159523).</text>
</comment>
<comment type="domain">
    <text evidence="5">The sigma-70 factor domain-2 mediates sequence-specific interaction with the -10 element in promoter DNA, and plays an important role in melting the double-stranded DNA and the formation of the transcription bubble. The sigma-70 factor domain-2 mediates interaction with the RNA polymerase subunits RpoB and RpoC.</text>
</comment>
<comment type="domain">
    <text evidence="5 10">The sigma-70 factor domain-4 contains a helix-turn-helix (H-T-H) motif that mediates interaction with the -35 element in promoter DNA. The domain also mediates interaction with the RNA polymerase subunit RpoA. Interactions between sigma-70 factor domain-4 and anti-sigma factors prevents interaction of sigma factors with the RNA polymerase catalytic core.</text>
</comment>
<comment type="disruption phenotype">
    <text evidence="15 16">Reduced viability at 37 degrees Celsius, death at 42 degrees Celsius (PubMed:7889935). Loss of transcription from rpoE-dependent promoters (PubMed:7889935). Increased sensitivity to outer membrane disruption (PubMed:7889934).</text>
</comment>
<comment type="similarity">
    <text evidence="21">Belongs to the sigma-70 factor family. ECF subfamily.</text>
</comment>
<comment type="sequence caution" evidence="21">
    <conflict type="erroneous initiation">
        <sequence resource="EMBL-CDS" id="BAA10920"/>
    </conflict>
    <text>Extended N-terminus.</text>
</comment>
<organism>
    <name type="scientific">Escherichia coli (strain K12)</name>
    <dbReference type="NCBI Taxonomy" id="83333"/>
    <lineage>
        <taxon>Bacteria</taxon>
        <taxon>Pseudomonadati</taxon>
        <taxon>Pseudomonadota</taxon>
        <taxon>Gammaproteobacteria</taxon>
        <taxon>Enterobacterales</taxon>
        <taxon>Enterobacteriaceae</taxon>
        <taxon>Escherichia</taxon>
    </lineage>
</organism>
<dbReference type="EMBL" id="D13169">
    <property type="status" value="NOT_ANNOTATED_CDS"/>
    <property type="molecule type" value="Genomic_DNA"/>
</dbReference>
<dbReference type="EMBL" id="U37089">
    <property type="protein sequence ID" value="AAC45314.1"/>
    <property type="molecule type" value="Genomic_DNA"/>
</dbReference>
<dbReference type="EMBL" id="D64044">
    <property type="protein sequence ID" value="BAA10920.1"/>
    <property type="status" value="ALT_INIT"/>
    <property type="molecule type" value="Genomic_DNA"/>
</dbReference>
<dbReference type="EMBL" id="U00096">
    <property type="protein sequence ID" value="AAC75626.1"/>
    <property type="molecule type" value="Genomic_DNA"/>
</dbReference>
<dbReference type="EMBL" id="AP009048">
    <property type="protein sequence ID" value="BAE76749.1"/>
    <property type="molecule type" value="Genomic_DNA"/>
</dbReference>
<dbReference type="EMBL" id="U10148">
    <property type="protein sequence ID" value="AAA83998.1"/>
    <property type="molecule type" value="Genomic_DNA"/>
</dbReference>
<dbReference type="PIR" id="I60227">
    <property type="entry name" value="I60227"/>
</dbReference>
<dbReference type="RefSeq" id="NP_417068.1">
    <property type="nucleotide sequence ID" value="NC_000913.3"/>
</dbReference>
<dbReference type="RefSeq" id="WP_001295364.1">
    <property type="nucleotide sequence ID" value="NZ_STEB01000011.1"/>
</dbReference>
<dbReference type="PDB" id="1OR7">
    <property type="method" value="X-ray"/>
    <property type="resolution" value="2.00 A"/>
    <property type="chains" value="A/B=1-191"/>
</dbReference>
<dbReference type="PDB" id="2H27">
    <property type="method" value="X-ray"/>
    <property type="resolution" value="2.30 A"/>
    <property type="chains" value="A/D=122-191"/>
</dbReference>
<dbReference type="PDB" id="5OR5">
    <property type="method" value="NMR"/>
    <property type="chains" value="A=1-64, A=79-92"/>
</dbReference>
<dbReference type="PDB" id="6JBQ">
    <property type="method" value="EM"/>
    <property type="resolution" value="4.02 A"/>
    <property type="chains" value="F=1-191"/>
</dbReference>
<dbReference type="PDBsum" id="1OR7"/>
<dbReference type="PDBsum" id="2H27"/>
<dbReference type="PDBsum" id="5OR5"/>
<dbReference type="PDBsum" id="6JBQ"/>
<dbReference type="BMRB" id="P0AGB6"/>
<dbReference type="EMDB" id="EMD-9792"/>
<dbReference type="SMR" id="P0AGB6"/>
<dbReference type="BioGRID" id="4263046">
    <property type="interactions" value="238"/>
</dbReference>
<dbReference type="BioGRID" id="851388">
    <property type="interactions" value="9"/>
</dbReference>
<dbReference type="ComplexPortal" id="CPX-2532">
    <property type="entry name" value="rpoe-rsea-rseb sigma-antisigma complex"/>
</dbReference>
<dbReference type="ComplexPortal" id="CPX-4885">
    <property type="entry name" value="DNA-directed RNA polymerase holoenzyme complex, SigmaE variant"/>
</dbReference>
<dbReference type="DIP" id="DIP-10774N"/>
<dbReference type="FunCoup" id="P0AGB6">
    <property type="interactions" value="350"/>
</dbReference>
<dbReference type="IntAct" id="P0AGB6">
    <property type="interactions" value="30"/>
</dbReference>
<dbReference type="STRING" id="511145.b2573"/>
<dbReference type="jPOST" id="P0AGB6"/>
<dbReference type="PaxDb" id="511145-b2573"/>
<dbReference type="EnsemblBacteria" id="AAC75626">
    <property type="protein sequence ID" value="AAC75626"/>
    <property type="gene ID" value="b2573"/>
</dbReference>
<dbReference type="GeneID" id="93774518"/>
<dbReference type="GeneID" id="947050"/>
<dbReference type="KEGG" id="ecj:JW2557"/>
<dbReference type="KEGG" id="eco:b2573"/>
<dbReference type="KEGG" id="ecoc:C3026_14250"/>
<dbReference type="PATRIC" id="fig|1411691.4.peg.4161"/>
<dbReference type="EchoBASE" id="EB1843"/>
<dbReference type="eggNOG" id="COG1595">
    <property type="taxonomic scope" value="Bacteria"/>
</dbReference>
<dbReference type="HOGENOM" id="CLU_047691_3_0_6"/>
<dbReference type="InParanoid" id="P0AGB6"/>
<dbReference type="OMA" id="QFYTWLY"/>
<dbReference type="OrthoDB" id="9780326at2"/>
<dbReference type="PhylomeDB" id="P0AGB6"/>
<dbReference type="BioCyc" id="EcoCyc:RPOE-MONOMER"/>
<dbReference type="BioCyc" id="MetaCyc:RPOE-MONOMER"/>
<dbReference type="EvolutionaryTrace" id="P0AGB6"/>
<dbReference type="PHI-base" id="PHI:123198"/>
<dbReference type="PRO" id="PR:P0AGB6"/>
<dbReference type="Proteomes" id="UP000000625">
    <property type="component" value="Chromosome"/>
</dbReference>
<dbReference type="GO" id="GO:0005737">
    <property type="term" value="C:cytoplasm"/>
    <property type="evidence" value="ECO:0000314"/>
    <property type="project" value="EcoCyc"/>
</dbReference>
<dbReference type="GO" id="GO:0000345">
    <property type="term" value="C:cytosolic DNA-directed RNA polymerase complex"/>
    <property type="evidence" value="ECO:0000353"/>
    <property type="project" value="ComplexPortal"/>
</dbReference>
<dbReference type="GO" id="GO:0005886">
    <property type="term" value="C:plasma membrane"/>
    <property type="evidence" value="ECO:0000314"/>
    <property type="project" value="ComplexPortal"/>
</dbReference>
<dbReference type="GO" id="GO:1903865">
    <property type="term" value="C:sigma factor antagonist complex"/>
    <property type="evidence" value="ECO:0000353"/>
    <property type="project" value="ComplexPortal"/>
</dbReference>
<dbReference type="GO" id="GO:0003677">
    <property type="term" value="F:DNA binding"/>
    <property type="evidence" value="ECO:0007669"/>
    <property type="project" value="UniProtKB-KW"/>
</dbReference>
<dbReference type="GO" id="GO:0016987">
    <property type="term" value="F:sigma factor activity"/>
    <property type="evidence" value="ECO:0000318"/>
    <property type="project" value="GO_Central"/>
</dbReference>
<dbReference type="GO" id="GO:0036460">
    <property type="term" value="P:cellular response to cell envelope stress"/>
    <property type="evidence" value="ECO:0000303"/>
    <property type="project" value="ComplexPortal"/>
</dbReference>
<dbReference type="GO" id="GO:0006352">
    <property type="term" value="P:DNA-templated transcription initiation"/>
    <property type="evidence" value="ECO:0000314"/>
    <property type="project" value="ComplexPortal"/>
</dbReference>
<dbReference type="GO" id="GO:0045892">
    <property type="term" value="P:negative regulation of DNA-templated transcription"/>
    <property type="evidence" value="ECO:0000303"/>
    <property type="project" value="ComplexPortal"/>
</dbReference>
<dbReference type="GO" id="GO:0006355">
    <property type="term" value="P:regulation of DNA-templated transcription"/>
    <property type="evidence" value="ECO:0000314"/>
    <property type="project" value="EcoCyc"/>
</dbReference>
<dbReference type="GO" id="GO:2000142">
    <property type="term" value="P:regulation of DNA-templated transcription initiation"/>
    <property type="evidence" value="ECO:0000314"/>
    <property type="project" value="ComplexPortal"/>
</dbReference>
<dbReference type="GO" id="GO:0006970">
    <property type="term" value="P:response to osmotic stress"/>
    <property type="evidence" value="ECO:0000314"/>
    <property type="project" value="EcoCyc"/>
</dbReference>
<dbReference type="GO" id="GO:0009266">
    <property type="term" value="P:response to temperature stimulus"/>
    <property type="evidence" value="ECO:0000314"/>
    <property type="project" value="EcoCyc"/>
</dbReference>
<dbReference type="GO" id="GO:0090605">
    <property type="term" value="P:submerged biofilm formation"/>
    <property type="evidence" value="ECO:0000303"/>
    <property type="project" value="ComplexPortal"/>
</dbReference>
<dbReference type="CDD" id="cd06171">
    <property type="entry name" value="Sigma70_r4"/>
    <property type="match status" value="1"/>
</dbReference>
<dbReference type="FunFam" id="1.10.10.10:FF:000043">
    <property type="entry name" value="RNA polymerase sigma factor"/>
    <property type="match status" value="1"/>
</dbReference>
<dbReference type="FunFam" id="1.10.1740.10:FF:000001">
    <property type="entry name" value="RNA polymerase sigma factor"/>
    <property type="match status" value="1"/>
</dbReference>
<dbReference type="Gene3D" id="1.10.1740.10">
    <property type="match status" value="1"/>
</dbReference>
<dbReference type="Gene3D" id="1.10.10.10">
    <property type="entry name" value="Winged helix-like DNA-binding domain superfamily/Winged helix DNA-binding domain"/>
    <property type="match status" value="1"/>
</dbReference>
<dbReference type="InterPro" id="IPR039425">
    <property type="entry name" value="RNA_pol_sigma-70-like"/>
</dbReference>
<dbReference type="InterPro" id="IPR014284">
    <property type="entry name" value="RNA_pol_sigma-70_dom"/>
</dbReference>
<dbReference type="InterPro" id="IPR000838">
    <property type="entry name" value="RNA_pol_sigma70_ECF_CS"/>
</dbReference>
<dbReference type="InterPro" id="IPR007627">
    <property type="entry name" value="RNA_pol_sigma70_r2"/>
</dbReference>
<dbReference type="InterPro" id="IPR013249">
    <property type="entry name" value="RNA_pol_sigma70_r4_t2"/>
</dbReference>
<dbReference type="InterPro" id="IPR014286">
    <property type="entry name" value="RNA_pol_sigma70_RpoE"/>
</dbReference>
<dbReference type="InterPro" id="IPR013325">
    <property type="entry name" value="RNA_pol_sigma_r2"/>
</dbReference>
<dbReference type="InterPro" id="IPR013324">
    <property type="entry name" value="RNA_pol_sigma_r3/r4-like"/>
</dbReference>
<dbReference type="InterPro" id="IPR036388">
    <property type="entry name" value="WH-like_DNA-bd_sf"/>
</dbReference>
<dbReference type="NCBIfam" id="TIGR02939">
    <property type="entry name" value="RpoE_Sigma70"/>
    <property type="match status" value="1"/>
</dbReference>
<dbReference type="NCBIfam" id="TIGR02937">
    <property type="entry name" value="sigma70-ECF"/>
    <property type="match status" value="1"/>
</dbReference>
<dbReference type="PANTHER" id="PTHR43133:SF53">
    <property type="entry name" value="ECF RNA POLYMERASE SIGMA-E FACTOR"/>
    <property type="match status" value="1"/>
</dbReference>
<dbReference type="PANTHER" id="PTHR43133">
    <property type="entry name" value="RNA POLYMERASE ECF-TYPE SIGMA FACTO"/>
    <property type="match status" value="1"/>
</dbReference>
<dbReference type="Pfam" id="PF04542">
    <property type="entry name" value="Sigma70_r2"/>
    <property type="match status" value="1"/>
</dbReference>
<dbReference type="Pfam" id="PF08281">
    <property type="entry name" value="Sigma70_r4_2"/>
    <property type="match status" value="1"/>
</dbReference>
<dbReference type="SUPFAM" id="SSF88946">
    <property type="entry name" value="Sigma2 domain of RNA polymerase sigma factors"/>
    <property type="match status" value="1"/>
</dbReference>
<dbReference type="SUPFAM" id="SSF88659">
    <property type="entry name" value="Sigma3 and sigma4 domains of RNA polymerase sigma factors"/>
    <property type="match status" value="1"/>
</dbReference>
<dbReference type="PROSITE" id="PS01063">
    <property type="entry name" value="SIGMA70_ECF"/>
    <property type="match status" value="1"/>
</dbReference>
<evidence type="ECO:0000250" key="1"/>
<evidence type="ECO:0000269" key="2">
    <source>
    </source>
</evidence>
<evidence type="ECO:0000269" key="3">
    <source>
    </source>
</evidence>
<evidence type="ECO:0000269" key="4">
    <source>
    </source>
</evidence>
<evidence type="ECO:0000269" key="5">
    <source>
    </source>
</evidence>
<evidence type="ECO:0000269" key="6">
    <source>
    </source>
</evidence>
<evidence type="ECO:0000269" key="7">
    <source>
    </source>
</evidence>
<evidence type="ECO:0000269" key="8">
    <source>
    </source>
</evidence>
<evidence type="ECO:0000269" key="9">
    <source>
    </source>
</evidence>
<evidence type="ECO:0000269" key="10">
    <source>
    </source>
</evidence>
<evidence type="ECO:0000269" key="11">
    <source>
    </source>
</evidence>
<evidence type="ECO:0000269" key="12">
    <source>
    </source>
</evidence>
<evidence type="ECO:0000269" key="13">
    <source>
    </source>
</evidence>
<evidence type="ECO:0000269" key="14">
    <source>
    </source>
</evidence>
<evidence type="ECO:0000269" key="15">
    <source>
    </source>
</evidence>
<evidence type="ECO:0000269" key="16">
    <source>
    </source>
</evidence>
<evidence type="ECO:0000269" key="17">
    <source>
    </source>
</evidence>
<evidence type="ECO:0000269" key="18">
    <source>
    </source>
</evidence>
<evidence type="ECO:0000269" key="19">
    <source>
    </source>
</evidence>
<evidence type="ECO:0000269" key="20">
    <source>
    </source>
</evidence>
<evidence type="ECO:0000305" key="21"/>
<evidence type="ECO:0007744" key="22">
    <source>
        <dbReference type="PDB" id="1OR7"/>
    </source>
</evidence>
<evidence type="ECO:0007744" key="23">
    <source>
        <dbReference type="PDB" id="2H27"/>
    </source>
</evidence>
<evidence type="ECO:0007829" key="24">
    <source>
        <dbReference type="PDB" id="1OR7"/>
    </source>
</evidence>
<evidence type="ECO:0007829" key="25">
    <source>
        <dbReference type="PDB" id="2H27"/>
    </source>
</evidence>
<proteinExistence type="evidence at protein level"/>
<protein>
    <recommendedName>
        <fullName>ECF RNA polymerase sigma-E factor</fullName>
    </recommendedName>
    <alternativeName>
        <fullName>RNA polymerase sigma-E factor</fullName>
    </alternativeName>
    <alternativeName>
        <fullName>Sigma-24</fullName>
    </alternativeName>
</protein>
<name>RPOE_ECOLI</name>
<sequence length="191" mass="21696">MSEQLTDQVLVERVQKGDQKAFNLLVVRYQHKVASLVSRYVPSGDVPDVVQEAFIKAYRALDSFRGDSAFYTWLYRIAVNTAKNYLVAQGRRPPSSDVDAIEAENFESGGALKEISNPENLMLSEELRQIVFRTIESLPEDLRMAITLRELDGLSYEEIAAIMDCPVGTVRSRIFRAREAIDNKVQPLIRR</sequence>
<gene>
    <name type="primary">rpoE</name>
    <name type="synonym">sigE</name>
    <name type="ordered locus">b2573</name>
    <name type="ordered locus">JW2557</name>
</gene>
<keyword id="KW-0002">3D-structure</keyword>
<keyword id="KW-0963">Cytoplasm</keyword>
<keyword id="KW-0903">Direct protein sequencing</keyword>
<keyword id="KW-0238">DNA-binding</keyword>
<keyword id="KW-1185">Reference proteome</keyword>
<keyword id="KW-0731">Sigma factor</keyword>
<keyword id="KW-0346">Stress response</keyword>
<keyword id="KW-0804">Transcription</keyword>
<keyword id="KW-0805">Transcription regulation</keyword>
<accession>P0AGB6</accession>
<accession>P34086</accession>
<accession>Q2MAF7</accession>
<feature type="chain" id="PRO_0000093997" description="ECF RNA polymerase sigma-E factor">
    <location>
        <begin position="1"/>
        <end position="191"/>
    </location>
</feature>
<feature type="DNA-binding region" description="H-T-H motif" evidence="1">
    <location>
        <begin position="156"/>
        <end position="175"/>
    </location>
</feature>
<feature type="region of interest" description="Binds RNAP core" evidence="5">
    <location>
        <begin position="1"/>
        <end position="153"/>
    </location>
</feature>
<feature type="region of interest" description="Sigma-70 factor domain-2">
    <location>
        <begin position="25"/>
        <end position="92"/>
    </location>
</feature>
<feature type="region of interest" description="Sigma-70 factor domain-4">
    <location>
        <begin position="129"/>
        <end position="180"/>
    </location>
</feature>
<feature type="short sequence motif" description="Polymerase core binding">
    <location>
        <begin position="48"/>
        <end position="61"/>
    </location>
</feature>
<feature type="mutagenesis site" description="In SR1576; loss of sigma factor activity." evidence="16">
    <original>L</original>
    <variation>P</variation>
    <location>
        <position position="25"/>
    </location>
</feature>
<feature type="mutagenesis site" description="Binds RNAP and RseA normally." evidence="5">
    <original>C</original>
    <variation>A</variation>
    <location>
        <position position="165"/>
    </location>
</feature>
<feature type="mutagenesis site" description="In SR1723; loss of sigma factor activity." evidence="16">
    <original>S</original>
    <variation>P</variation>
    <location>
        <position position="172"/>
    </location>
</feature>
<feature type="mutagenesis site" description="In SR1502; decreased sigma factor activity. Does not bind RseA, still binds RNAP." evidence="5 16">
    <original>R</original>
    <variation>G</variation>
    <location>
        <position position="178"/>
    </location>
</feature>
<feature type="mutagenesis site" description="In SR1503; decreased sigma factor activity. Does not bind RseA, still binds RNAP." evidence="5">
    <original>I</original>
    <variation>A</variation>
    <location>
        <position position="181"/>
    </location>
</feature>
<feature type="mutagenesis site" description="In SR1504; decreased sigma factor activity. Does not bind RseA, still binds RNAP." evidence="5">
    <original>V</original>
    <variation>A</variation>
    <location>
        <position position="185"/>
    </location>
</feature>
<feature type="helix" evidence="24">
    <location>
        <begin position="2"/>
        <end position="15"/>
    </location>
</feature>
<feature type="helix" evidence="24">
    <location>
        <begin position="19"/>
        <end position="37"/>
    </location>
</feature>
<feature type="turn" evidence="24">
    <location>
        <begin position="38"/>
        <end position="40"/>
    </location>
</feature>
<feature type="helix" evidence="24">
    <location>
        <begin position="43"/>
        <end position="45"/>
    </location>
</feature>
<feature type="helix" evidence="24">
    <location>
        <begin position="46"/>
        <end position="60"/>
    </location>
</feature>
<feature type="helix" evidence="24">
    <location>
        <begin position="61"/>
        <end position="63"/>
    </location>
</feature>
<feature type="strand" evidence="24">
    <location>
        <begin position="66"/>
        <end position="68"/>
    </location>
</feature>
<feature type="helix" evidence="24">
    <location>
        <begin position="70"/>
        <end position="89"/>
    </location>
</feature>
<feature type="helix" evidence="24">
    <location>
        <begin position="95"/>
        <end position="104"/>
    </location>
</feature>
<feature type="strand" evidence="24">
    <location>
        <begin position="121"/>
        <end position="123"/>
    </location>
</feature>
<feature type="helix" evidence="24">
    <location>
        <begin position="124"/>
        <end position="137"/>
    </location>
</feature>
<feature type="helix" evidence="24">
    <location>
        <begin position="140"/>
        <end position="150"/>
    </location>
</feature>
<feature type="helix" evidence="24">
    <location>
        <begin position="156"/>
        <end position="162"/>
    </location>
</feature>
<feature type="helix" evidence="24">
    <location>
        <begin position="167"/>
        <end position="185"/>
    </location>
</feature>
<feature type="helix" evidence="25">
    <location>
        <begin position="186"/>
        <end position="188"/>
    </location>
</feature>
<reference key="1">
    <citation type="book" date="1993" name="The translational apparatus">
        <title>Non-ribosomal proteins affecting the assembly of ribosomes in Escherichia coli.</title>
        <editorList>
            <person name="Nierhaus K.H."/>
        </editorList>
        <authorList>
            <person name="Nashimoto H."/>
        </authorList>
    </citation>
    <scope>NUCLEOTIDE SEQUENCE [GENOMIC DNA]</scope>
    <source>
        <strain>K12</strain>
    </source>
</reference>
<reference key="2">
    <citation type="journal article" date="1995" name="EMBO J.">
        <title>The rpoE gene encoding the sigma E (sigma 24) heat shock sigma factor of Escherichia coli.</title>
        <authorList>
            <person name="Raina S."/>
            <person name="Missiakas D."/>
            <person name="Georgopoulos C."/>
        </authorList>
    </citation>
    <scope>NUCLEOTIDE SEQUENCE [GENOMIC DNA]</scope>
    <scope>FUNCTION AS A SIGMA FACTOR</scope>
    <scope>SUBUNIT</scope>
    <scope>AUTOREGULATION</scope>
    <scope>GENE IDENTIFICATION</scope>
    <scope>DISRUPTION PHENOTYPE</scope>
    <scope>MUTAGENESIS OF LEU-25; SER-172 AND ARG-178</scope>
    <source>
        <strain>K12 / MC4100 / ATCC 35695 / DSM 6574</strain>
        <strain>K12 / W3110 / ATCC 27325 / DSM 5911</strain>
    </source>
</reference>
<reference key="3">
    <citation type="submission" date="1995-09" db="EMBL/GenBank/DDBJ databases">
        <authorList>
            <person name="Nashimoto H."/>
            <person name="Saito N."/>
        </authorList>
    </citation>
    <scope>NUCLEOTIDE SEQUENCE [GENOMIC DNA]</scope>
    <source>
        <strain>K12 / W3110 / ATCC 27325 / DSM 5911</strain>
    </source>
</reference>
<reference key="4">
    <citation type="journal article" date="1997" name="Science">
        <title>The complete genome sequence of Escherichia coli K-12.</title>
        <authorList>
            <person name="Blattner F.R."/>
            <person name="Plunkett G. III"/>
            <person name="Bloch C.A."/>
            <person name="Perna N.T."/>
            <person name="Burland V."/>
            <person name="Riley M."/>
            <person name="Collado-Vides J."/>
            <person name="Glasner J.D."/>
            <person name="Rode C.K."/>
            <person name="Mayhew G.F."/>
            <person name="Gregor J."/>
            <person name="Davis N.W."/>
            <person name="Kirkpatrick H.A."/>
            <person name="Goeden M.A."/>
            <person name="Rose D.J."/>
            <person name="Mau B."/>
            <person name="Shao Y."/>
        </authorList>
    </citation>
    <scope>NUCLEOTIDE SEQUENCE [LARGE SCALE GENOMIC DNA]</scope>
    <source>
        <strain>K12 / MG1655 / ATCC 47076</strain>
    </source>
</reference>
<reference key="5">
    <citation type="journal article" date="2006" name="Mol. Syst. Biol.">
        <title>Highly accurate genome sequences of Escherichia coli K-12 strains MG1655 and W3110.</title>
        <authorList>
            <person name="Hayashi K."/>
            <person name="Morooka N."/>
            <person name="Yamamoto Y."/>
            <person name="Fujita K."/>
            <person name="Isono K."/>
            <person name="Choi S."/>
            <person name="Ohtsubo E."/>
            <person name="Baba T."/>
            <person name="Wanner B.L."/>
            <person name="Mori H."/>
            <person name="Horiuchi T."/>
        </authorList>
    </citation>
    <scope>NUCLEOTIDE SEQUENCE [LARGE SCALE GENOMIC DNA]</scope>
    <source>
        <strain>K12 / W3110 / ATCC 27325 / DSM 5911</strain>
    </source>
</reference>
<reference key="6">
    <citation type="journal article" date="1995" name="J. Bacteriol.">
        <title>Functional equivalence of Escherichia coli sigma E and Pseudomonas aeruginosa AlgU: E. coli rpoE restores mucoidy and reduces sensitivity to reactive oxygen intermediates in algU mutants of P. aeruginosa.</title>
        <authorList>
            <person name="Yu H."/>
            <person name="Schurr M.J."/>
            <person name="Deretic V."/>
        </authorList>
    </citation>
    <scope>NUCLEOTIDE SEQUENCE [GENOMIC DNA] OF 171-191</scope>
    <source>
        <strain>K12 / VD1870</strain>
    </source>
</reference>
<reference key="7">
    <citation type="journal article" date="1995" name="EMBO J.">
        <title>rpoE, the gene encoding the second heat-shock sigma factor, sigma E, in Escherichia coli.</title>
        <authorList>
            <person name="Rouviere P.E."/>
            <person name="de Las Penas A."/>
            <person name="Mecsas J."/>
            <person name="Lu C.Z."/>
            <person name="Rudd K.E."/>
            <person name="Gross C.A."/>
        </authorList>
    </citation>
    <scope>PROTEIN SEQUENCE OF 40-56</scope>
    <scope>GENE IDENTIFICATION</scope>
    <scope>FUNCTION AS A SIGMA FACTOR</scope>
    <scope>INDUCTION</scope>
    <scope>REGULON</scope>
    <scope>DISRUPTION PHENOTYPE</scope>
    <source>
        <strain>K12 / W3110 / ATCC 27325 / DSM 5911</strain>
    </source>
</reference>
<reference key="8">
    <citation type="journal article" date="1989" name="Genes Dev.">
        <title>Identification of the sigma E subunit of Escherichia coli RNA polymerase: a second alternate sigma factor involved in high-temperature gene expression.</title>
        <authorList>
            <person name="Erickson J.W."/>
            <person name="Gross C.A."/>
        </authorList>
    </citation>
    <scope>FUNCTION AS A SIGMA FACTOR</scope>
    <scope>SUBUNIT</scope>
    <scope>INDUCTION AT HIGH TEMPERATURE</scope>
    <source>
        <strain>SC122</strain>
    </source>
</reference>
<reference key="9">
    <citation type="journal article" date="1993" name="Genes Dev.">
        <title>The activity of sigma E, an Escherichia coli heat-inducible sigma-factor, is modulated by expression of outer membrane proteins.</title>
        <authorList>
            <person name="Mecsas J."/>
            <person name="Rouviere P.E."/>
            <person name="Erickson J.W."/>
            <person name="Donohue T.J."/>
            <person name="Gross C.A."/>
        </authorList>
    </citation>
    <scope>INDUCTION IN RESPONSE TO OUTER MEMBRANE PROTEIN LEVELS</scope>
</reference>
<reference key="10">
    <citation type="journal article" date="1994" name="J. Bacteriol.">
        <title>Analysis of promoters controlled by the putative sigma factor AlgU regulating conversion to mucoidy in Pseudomonas aeruginosa: relationship to sigma E and stress response.</title>
        <authorList>
            <person name="Martin D.W."/>
            <person name="Schurr M.J."/>
            <person name="Yu H."/>
            <person name="Deretic V."/>
        </authorList>
    </citation>
    <scope>GENE IDENTIFICATION</scope>
</reference>
<reference key="11">
    <citation type="journal article" date="1994" name="Proc. Natl. Acad. Sci. U.S.A.">
        <title>Analysis of the Streptomyces coelicolor sigE gene reveals the existence of a subfamily of eubacterial RNA polymerase sigma factors involved in the regulation of extracytoplasmic functions.</title>
        <authorList>
            <person name="Lonetto M.A."/>
            <person name="Brown K.L."/>
            <person name="Rudd K.E."/>
            <person name="Buttner M.J."/>
        </authorList>
    </citation>
    <scope>GENE IDENTIFICATION</scope>
</reference>
<reference key="12">
    <citation type="journal article" date="1997" name="Mol. Microbiol.">
        <title>Modulation of the Escherichia coli sigmaE (RpoE) heat-shock transcription-factor activity by the RseA, RseB and RseC proteins.</title>
        <authorList>
            <person name="Missiakas D."/>
            <person name="Mayer M.P."/>
            <person name="Lemaire M."/>
            <person name="Georgopoulos C."/>
            <person name="Raina S."/>
        </authorList>
    </citation>
    <scope>FUNCTION AS A SIGMA FACTOR</scope>
    <scope>ACTIVITY REGULATION</scope>
    <scope>INTERACTION WITH RSEA</scope>
    <scope>SUBUNIT</scope>
    <scope>SUBCELLULAR LOCATION</scope>
    <scope>OPERON</scope>
    <source>
        <strain>K12 / MC4100 / ATCC 35695 / DSM 6574</strain>
    </source>
</reference>
<reference key="13">
    <citation type="journal article" date="1997" name="Mol. Microbiol.">
        <title>The sigmaE-mediated response to extracytoplasmic stress in Escherichia coli is transduced by RseA and RseB, two negative regulators of sigmaE.</title>
        <authorList>
            <person name="De Las Penas A."/>
            <person name="Connolly L."/>
            <person name="Gross C.A."/>
        </authorList>
    </citation>
    <scope>FUNCTION AS A SIGMA FACTOR</scope>
    <scope>INTERACTION WITH RSEA</scope>
    <scope>SUBUNIT</scope>
    <scope>OPERON</scope>
    <source>
        <strain>K12 / MC1061 / ATCC 53338 / DSM 7140</strain>
    </source>
</reference>
<reference key="14">
    <citation type="journal article" date="1997" name="EMBO J.">
        <title>The chaperone-assisted membrane release and folding pathway is sensed by two signal transduction systems.</title>
        <authorList>
            <person name="Jones C.H."/>
            <person name="Danese P.N."/>
            <person name="Pinkner J.S."/>
            <person name="Silhavy T.J."/>
            <person name="Hultgren S.J."/>
        </authorList>
    </citation>
    <scope>INDUCTION</scope>
</reference>
<reference key="15">
    <citation type="journal article" date="1999" name="Genes Dev.">
        <title>The Escherichia coli sigma(E)-dependent extracytoplasmic stress response is controlled by the regulated proteolysis of an anti-sigma factor.</title>
        <authorList>
            <person name="Ades S.E."/>
            <person name="Connolly L.E."/>
            <person name="Alba B.M."/>
            <person name="Gross C.A."/>
        </authorList>
    </citation>
    <scope>INDUCTION</scope>
    <source>
        <strain>K12 / MC1061 / ATCC 53338 / DSM 7140</strain>
    </source>
</reference>
<reference key="16">
    <citation type="journal article" date="2000" name="J. Biol. Chem.">
        <title>RseB binding to the periplasmic domain of RseA modulates the RseA:sigmaE interaction in the cytoplasm and the availability of sigmaE.RNA polymerase.</title>
        <authorList>
            <person name="Collinet B."/>
            <person name="Yuzawa H."/>
            <person name="Chen T."/>
            <person name="Herrera C."/>
            <person name="Missiakas D."/>
        </authorList>
    </citation>
    <scope>INTERACTION WITH RSEA</scope>
    <scope>SUBCELLULAR LOCATION</scope>
    <source>
        <strain>K12 / MC4100 / ATCC 35695 / DSM 6574</strain>
    </source>
</reference>
<reference key="17">
    <citation type="journal article" date="2001" name="J. Biol. Chem.">
        <title>Characterization of the Escherichia coli sigma E regulon.</title>
        <authorList>
            <person name="Dartigalongue C."/>
            <person name="Missiakas D."/>
            <person name="Raina S."/>
        </authorList>
    </citation>
    <scope>REGULON</scope>
</reference>
<reference key="18">
    <citation type="journal article" date="2002" name="J. Biol. Chem.">
        <title>Interaction of the conserved region 4.2 of sigma(E) with the RseA anti-sigma factor.</title>
        <authorList>
            <person name="Tam C."/>
            <person name="Collinet B."/>
            <person name="Lau G."/>
            <person name="Raina S."/>
            <person name="Missiakas D."/>
        </authorList>
    </citation>
    <scope>INTERACTION WITH RNA POLYMERASE AND RSEA</scope>
    <scope>SUBUNIT</scope>
    <scope>DOMAIN</scope>
    <scope>MUTAGENESIS OF CYS-165; ARG-178; ILE-181 AND VAL-185</scope>
    <source>
        <strain>K12 / MC4100 / ATCC 35695 / DSM 6574</strain>
    </source>
</reference>
<reference key="19">
    <citation type="journal article" date="2003" name="Res. Microbiol.">
        <title>Changes in Escherichia coli transcriptome during acclimatization at low temperature.</title>
        <authorList>
            <person name="Polissi A."/>
            <person name="De Laurentis W."/>
            <person name="Zangrossi S."/>
            <person name="Briani F."/>
            <person name="Longhi V."/>
            <person name="Pesole G."/>
            <person name="Deho G."/>
        </authorList>
    </citation>
    <scope>INDUCTION BY COLD SHOCK</scope>
    <source>
        <strain>K12 / MG1655 / ATCC 47076</strain>
    </source>
</reference>
<reference key="20">
    <citation type="journal article" date="2004" name="Genes Dev.">
        <title>Modulating substrate choice: the SspB adaptor delivers a regulator of the extracytoplasmic-stress response to the AAA+ protease ClpXP for degradation.</title>
        <authorList>
            <person name="Flynn J.M."/>
            <person name="Levchenko I."/>
            <person name="Sauer R.T."/>
            <person name="Baker T.A."/>
        </authorList>
    </citation>
    <scope>ACTIVITY REGULATION BY CLPX-CLPP</scope>
    <scope>INTERACTION WITH RSEA AND SSPB</scope>
</reference>
<reference key="21">
    <citation type="journal article" date="2006" name="PLoS Biol.">
        <title>Conserved and variable functions of the sigmaE stress response in related genomes.</title>
        <authorList>
            <person name="Rhodius V.A."/>
            <person name="Suh W.C."/>
            <person name="Nonaka G."/>
            <person name="West J."/>
            <person name="Gross C.A."/>
        </authorList>
    </citation>
    <scope>FUNCTION</scope>
    <scope>REGULON</scope>
    <source>
        <strain>K12 / MG1655 / ATCC 47076</strain>
    </source>
</reference>
<reference key="22">
    <citation type="journal article" date="2007" name="Genes Dev.">
        <title>Design principles of the proteolytic cascade governing the sigmaE-mediated envelope stress response in Escherichia coli: keys to graded, buffered, and rapid signal transduction.</title>
        <authorList>
            <person name="Chaba R."/>
            <person name="Grigorova I.L."/>
            <person name="Flynn J.M."/>
            <person name="Baker T.A."/>
            <person name="Gross C.A."/>
        </authorList>
    </citation>
    <scope>ACTIVITY REGULATION</scope>
</reference>
<reference key="23">
    <citation type="journal article" date="2013" name="Science">
        <title>Dual molecular signals mediate the bacterial response to outer-membrane stress.</title>
        <authorList>
            <person name="Lima S."/>
            <person name="Guo M.S."/>
            <person name="Chaba R."/>
            <person name="Gross C.A."/>
            <person name="Sauer R.T."/>
        </authorList>
    </citation>
    <scope>ACTIVITY REGULATION</scope>
    <scope>INDUCTION BY LIPOPOLYSACCHARIDE</scope>
    <source>
        <strain>K12</strain>
    </source>
</reference>
<reference key="24">
    <citation type="journal article" date="2017" name="J. Bacteriol.">
        <title>Circuitry linking the global Csr and sigma(E)-dependent cell envelope stress response systems.</title>
        <authorList>
            <person name="Yakhnin H."/>
            <person name="Aichele R."/>
            <person name="Ades S.E."/>
            <person name="Romeo T."/>
            <person name="Babitzke P."/>
        </authorList>
    </citation>
    <scope>FUNCTION</scope>
    <scope>MECHANISM OF TRANSLATION REGULATION</scope>
    <source>
        <strain>K12 / CF7789</strain>
    </source>
</reference>
<reference evidence="22" key="25">
    <citation type="journal article" date="2003" name="Mol. Cell">
        <title>Crystal structure of Escherichia coli sigmaE with the cytoplasmic domain of its anti-sigma RseA.</title>
        <authorList>
            <person name="Campbell E.A."/>
            <person name="Tupy J.L."/>
            <person name="Gruber T.M."/>
            <person name="Wang S."/>
            <person name="Sharp M.M."/>
            <person name="Gross C.A."/>
            <person name="Darst S.A."/>
        </authorList>
    </citation>
    <scope>X-RAY CRYSTALLOGRAPHY (2.0 ANGSTROMS) IN COMPLEX WITH RSEA</scope>
    <scope>INTERACTION WITH RNA POLYMERASE</scope>
    <scope>SUBUNIT</scope>
</reference>
<reference evidence="23" key="26">
    <citation type="journal article" date="2006" name="PLoS Biol.">
        <title>The structural basis for promoter -35 element recognition by the group IV sigma factors.</title>
        <authorList>
            <person name="Lane W.J."/>
            <person name="Darst S.A."/>
        </authorList>
    </citation>
    <scope>X-RAY CRYSTALLOGRAPHY (2.30 ANGSTROMS) OF 122-191 IN COMPLEX WITH DNA</scope>
    <scope>DOMAIN</scope>
</reference>